<comment type="function">
    <text evidence="2 10">ATP-dependent chromatin-remodeling factor that binds DNA through histones and regulates gene transcription. May specifically recognize and bind trimethylated 'Lys-27' (H3K27me3) and non-methylated 'Lys-4' of histone H3. Acts as a component of the histone deacetylase NuRD complex which participates in the remodeling of chromatin. Plays a role in the development of the nervous system by activating the expression of genes promoting neuron terminal differentiation. In parallel, it may also positively regulate the trimethylation of histone H3 at 'Lys-27' thereby specifically repressing genes that promote the differentiation into non-neuronal cell lineages. Regulates the expression of genes involved in cell proliferation and differentiation. Downstream activated genes may include CDKN2A that positively regulates the p53/TP53 pathway, which in turn, prevents cell proliferation. In spermatogenesis, it probably regulates histone hyperacetylation and the replacement of histones by transition proteins in chromatin, a crucial step in the condensation of spermatid chromatin and the production of functional spermatozoa.</text>
</comment>
<comment type="catalytic activity">
    <reaction evidence="3">
        <text>ATP + H2O = ADP + phosphate + H(+)</text>
        <dbReference type="Rhea" id="RHEA:13065"/>
        <dbReference type="ChEBI" id="CHEBI:15377"/>
        <dbReference type="ChEBI" id="CHEBI:15378"/>
        <dbReference type="ChEBI" id="CHEBI:30616"/>
        <dbReference type="ChEBI" id="CHEBI:43474"/>
        <dbReference type="ChEBI" id="CHEBI:456216"/>
    </reaction>
</comment>
<comment type="subunit">
    <text evidence="2">Component of the nucleosome remodeling and deacetylase (NuRD) repressor complex, composed of core proteins MTA1, MTA2, MTA3, RBBP4, RBBP7, HDAC1, HDAC2, MBD2, MBD3, and peripherally associated proteins CDK2AP1, CDK2AP2, GATAD2A, GATAD2B, CHD3, CHD4 and CHD5. The exact stoichiometry of the NuRD complex is unknown, and some subunits such as MBD2 and MBD3, GATAD2A and GATAD2B, and CHD3, CHD4 and CHD5 define mutually exclusive NuRD complexes. Interacts with HDAC2.</text>
</comment>
<comment type="subcellular location">
    <subcellularLocation>
        <location evidence="10">Nucleus</location>
    </subcellularLocation>
    <subcellularLocation>
        <location evidence="2">Chromosome</location>
    </subcellularLocation>
</comment>
<comment type="tissue specificity">
    <text evidence="10">Expressed in brain regions enriched in neurons and not in regions rich in glial cells (at protein level).</text>
</comment>
<comment type="domain">
    <text evidence="2">The PHD domains mediate specific binding to histone H3 unmethylated at 'Lys-4' and may preferentially recruit the protein to transcriptionally inactive genes.</text>
</comment>
<comment type="domain">
    <text evidence="2">The chromo domains mediate specific binding to histone H3 trimethylated at 'Lys-27' (H3K27me3) and may be required in neuron differentiation for proper gene regulation.</text>
</comment>
<comment type="PTM">
    <text evidence="4">Methylated at Gln-1388 by N6AMT1.</text>
</comment>
<comment type="similarity">
    <text evidence="11">Belongs to the SNF2/RAD54 helicase family.</text>
</comment>
<sequence length="1948" mass="222263">MRGPLGTEEELPRLFAEEMENEEEMSEEEDGGLEGFEDFFPAEPVSLPKKKPKKLKESKSKGKRKKKEGSNDELSENEEDLEEKSESEGSDYSPTKKKKKKLKEKKEKKAKRKKRDEDEEDNEDGGLKEPKSSGQLMAEWGLDDVDYLFSEDDYHTLTNYKAFSQFLRPLIAKKNPKIPMSKMMTVLGAKWREFSANNPFKGSSAAAAAAAVAAAVETVTIAPPLAISPQQVPQPLPVRKAKTKEGKGPGVRKKNKGAKDSKKKGRGKRVAGLKFRFGGISKRKKGSSSEEDEPEDSDLDNASIHSSSVRSECSAALGKKNKRRRKKKRIDDGDGYETDHQDYCEVCQQGGEIILCDTCPRAYHLVCLDPELEKAPEGKWSCPHCEKEGIQWEPKDDDEEEEEGGCEEEEDDHMEFCRVCKDGGELLCCDACPSSYHLHCLNPPLPEIPNGEWLCPRCTCPPLKGKVQRILHWRWTEPPAPFMVGLPGPEVEPGMPPPRPLEGIPEREFFVKWAGLSYWHCSWVKELQLELYHTVMYRNYQRKNDMDEPPPFDYGSGDEDGKSEKRKNKDPLYAKMEERFYRYGIKPEWMMVHRILNHSFDKKGDVHYLIKWKDLPYDQCTWEIDEIDIPYYDNLKQTYWGHRELMLGEDARLPKRLVKKGKKLKDDKQEKPPDTPIVDPTVKFDKQPWYIDSTGGTLHPYQLEGLNWLRFSWAQGTDTILADEMGLGKTVQTIVFLYSLYKEGHSKGPYLVSAPLSTIINWEREFEMWAPDFYVVTYTGDKESRSVIRENEFSFEDNAIRGGKKVFRMKKEVQIKFHVLLTSYELITIDQAILGSIEWACLVVDEAHRLKNNQSKFFRVLNSYKIDYKLLLTGTPLQNNLEELFHLLNFLTPERFNNLEGFLEEFADISKEDQIKKLHDLLGPHMLRRLKADVFKNMPAKTELIVRVELSQMQKKYYKFILTRNFEALNSKGGGNQVSLLNIMMDLKKCCNHPYLFPVAAVEAPMLPNGSYDGSSLVKSSGKLMLLQKMLKKLRDEGHRVLIFSQMTKMLDLLEDFLEYEGYKYERIDGGITGGLRQEAIDRFNAPGAQQFCFLLSTRAGGLGINLATADTVIIYDSDWNPHNDIQAFSRAHRIGQNKKVMIYRFVTRASVEERITQVAKRKMMLTHLVVRPGLGSKSGSMTKQELDDILKFGTEELFKDDVEGMMSQGQRPTTPIPDVQSTKGGSLAAGAKKKHGGTPPGDNKDVEDSSVIHYDDAAISKLLDRNQDATDDTELQNMNEYLSSFKVAQYVVREEDGVEEVEREVIKQEENVDPDYWEKLLRHHYEQQQEDLARNLGKGKRIRKQVNYNDASQEDQEWQDELSDNQSEYSIGSEDEDEDFEERPEGQSGRRQSRRQLKSDRDKPLPPLLARVGGNIEVLGFNARQRKAFLNAIMRWGMPPQDAFNSHWLVRDLRGKSEKEFRAYVSLFMRHLCEPGADGAETFADGVPREGLSRQHVLTRIGVMSLVRKKVQEFEHVNGKYSTPDLVPEGPEGKKPGEVISSDPNTPVPASPAQLPPAPLGLPDKMEAQLGYTDEKESGTQKPKKSLEIQALPTALDRVEAEDKHQSSDSKDRAREERMEEVEKAQGSPEQPLKEETLPDKEPVPDKLELSLSHSNDFRPDDPKAEEKEPTETQQNGDREEDEEGKKEDKNGKFKFMFNIADGGFTELHTLWQNEERAAVSSGKIYEIWHRRHDYWLLAGIVTHGYARWQDIQNDPRYMILNEPFKSEVHKGNYLEMKNKFLARRFKLLEQALVIEEQLRRAAYLNMTQDPNHPAMALNARLAEVECLAESHQHLSKESLAGNKPANAVLHKVLNQLEELLSDMKADVTRLPSMLSRIPPVAARLQMSERSILSRLTNRAGDPTIQQGAFGSSQMYNNSFGPNFRGPGPGGIVNYNQMPLGPYVTGR</sequence>
<accession>D3ZD32</accession>
<feature type="chain" id="PRO_0000429327" description="Chromodomain-helicase-DNA-binding protein 5">
    <location>
        <begin position="1"/>
        <end position="1948"/>
    </location>
</feature>
<feature type="domain" description="Chromo 1" evidence="5">
    <location>
        <begin position="495"/>
        <end position="552"/>
    </location>
</feature>
<feature type="domain" description="Chromo 2" evidence="5">
    <location>
        <begin position="590"/>
        <end position="651"/>
    </location>
</feature>
<feature type="domain" description="Helicase ATP-binding" evidence="7">
    <location>
        <begin position="710"/>
        <end position="894"/>
    </location>
</feature>
<feature type="domain" description="Helicase C-terminal" evidence="8">
    <location>
        <begin position="1026"/>
        <end position="1191"/>
    </location>
</feature>
<feature type="zinc finger region" description="PHD-type 1" evidence="6">
    <location>
        <begin position="341"/>
        <end position="388"/>
    </location>
</feature>
<feature type="zinc finger region" description="PHD-type 2" evidence="6">
    <location>
        <begin position="414"/>
        <end position="461"/>
    </location>
</feature>
<feature type="region of interest" description="Disordered" evidence="9">
    <location>
        <begin position="1"/>
        <end position="136"/>
    </location>
</feature>
<feature type="region of interest" description="Disordered" evidence="9">
    <location>
        <begin position="228"/>
        <end position="268"/>
    </location>
</feature>
<feature type="region of interest" description="Disordered" evidence="9">
    <location>
        <begin position="281"/>
        <end position="336"/>
    </location>
</feature>
<feature type="region of interest" description="Histone-binding" evidence="1">
    <location>
        <begin position="341"/>
        <end position="651"/>
    </location>
</feature>
<feature type="region of interest" description="Disordered" evidence="9">
    <location>
        <begin position="547"/>
        <end position="569"/>
    </location>
</feature>
<feature type="region of interest" description="Disordered" evidence="9">
    <location>
        <begin position="1206"/>
        <end position="1250"/>
    </location>
</feature>
<feature type="region of interest" description="Disordered" evidence="9">
    <location>
        <begin position="1349"/>
        <end position="1409"/>
    </location>
</feature>
<feature type="region of interest" description="Disordered" evidence="9">
    <location>
        <begin position="1521"/>
        <end position="1566"/>
    </location>
</feature>
<feature type="region of interest" description="Disordered" evidence="9">
    <location>
        <begin position="1595"/>
        <end position="1692"/>
    </location>
</feature>
<feature type="short sequence motif" description="DEAH box">
    <location>
        <begin position="845"/>
        <end position="848"/>
    </location>
</feature>
<feature type="compositionally biased region" description="Acidic residues" evidence="9">
    <location>
        <begin position="17"/>
        <end position="37"/>
    </location>
</feature>
<feature type="compositionally biased region" description="Acidic residues" evidence="9">
    <location>
        <begin position="71"/>
        <end position="89"/>
    </location>
</feature>
<feature type="compositionally biased region" description="Basic residues" evidence="9">
    <location>
        <begin position="95"/>
        <end position="114"/>
    </location>
</feature>
<feature type="compositionally biased region" description="Basic residues" evidence="9">
    <location>
        <begin position="250"/>
        <end position="268"/>
    </location>
</feature>
<feature type="compositionally biased region" description="Acidic residues" evidence="9">
    <location>
        <begin position="289"/>
        <end position="299"/>
    </location>
</feature>
<feature type="compositionally biased region" description="Basic residues" evidence="9">
    <location>
        <begin position="319"/>
        <end position="328"/>
    </location>
</feature>
<feature type="compositionally biased region" description="Basic and acidic residues" evidence="9">
    <location>
        <begin position="559"/>
        <end position="569"/>
    </location>
</feature>
<feature type="compositionally biased region" description="Acidic residues" evidence="9">
    <location>
        <begin position="1353"/>
        <end position="1364"/>
    </location>
</feature>
<feature type="compositionally biased region" description="Acidic residues" evidence="9">
    <location>
        <begin position="1374"/>
        <end position="1383"/>
    </location>
</feature>
<feature type="compositionally biased region" description="Pro residues" evidence="9">
    <location>
        <begin position="1547"/>
        <end position="1561"/>
    </location>
</feature>
<feature type="compositionally biased region" description="Basic and acidic residues" evidence="9">
    <location>
        <begin position="1598"/>
        <end position="1625"/>
    </location>
</feature>
<feature type="compositionally biased region" description="Basic and acidic residues" evidence="9">
    <location>
        <begin position="1633"/>
        <end position="1650"/>
    </location>
</feature>
<feature type="compositionally biased region" description="Basic and acidic residues" evidence="9">
    <location>
        <begin position="1657"/>
        <end position="1672"/>
    </location>
</feature>
<feature type="binding site" evidence="7">
    <location>
        <begin position="723"/>
        <end position="730"/>
    </location>
    <ligand>
        <name>ATP</name>
        <dbReference type="ChEBI" id="CHEBI:30616"/>
    </ligand>
</feature>
<feature type="modified residue" description="N5-methylglutamine" evidence="4">
    <location>
        <position position="1388"/>
    </location>
</feature>
<feature type="modified residue" description="Phosphoserine" evidence="2">
    <location>
        <position position="1552"/>
    </location>
</feature>
<organism>
    <name type="scientific">Rattus norvegicus</name>
    <name type="common">Rat</name>
    <dbReference type="NCBI Taxonomy" id="10116"/>
    <lineage>
        <taxon>Eukaryota</taxon>
        <taxon>Metazoa</taxon>
        <taxon>Chordata</taxon>
        <taxon>Craniata</taxon>
        <taxon>Vertebrata</taxon>
        <taxon>Euteleostomi</taxon>
        <taxon>Mammalia</taxon>
        <taxon>Eutheria</taxon>
        <taxon>Euarchontoglires</taxon>
        <taxon>Glires</taxon>
        <taxon>Rodentia</taxon>
        <taxon>Myomorpha</taxon>
        <taxon>Muroidea</taxon>
        <taxon>Muridae</taxon>
        <taxon>Murinae</taxon>
        <taxon>Rattus</taxon>
    </lineage>
</organism>
<keyword id="KW-0067">ATP-binding</keyword>
<keyword id="KW-0156">Chromatin regulator</keyword>
<keyword id="KW-0158">Chromosome</keyword>
<keyword id="KW-0221">Differentiation</keyword>
<keyword id="KW-0238">DNA-binding</keyword>
<keyword id="KW-0378">Hydrolase</keyword>
<keyword id="KW-0479">Metal-binding</keyword>
<keyword id="KW-0488">Methylation</keyword>
<keyword id="KW-0524">Neurogenesis</keyword>
<keyword id="KW-0547">Nucleotide-binding</keyword>
<keyword id="KW-0539">Nucleus</keyword>
<keyword id="KW-0597">Phosphoprotein</keyword>
<keyword id="KW-1185">Reference proteome</keyword>
<keyword id="KW-0677">Repeat</keyword>
<keyword id="KW-0744">Spermatogenesis</keyword>
<keyword id="KW-0804">Transcription</keyword>
<keyword id="KW-0805">Transcription regulation</keyword>
<keyword id="KW-0043">Tumor suppressor</keyword>
<keyword id="KW-0862">Zinc</keyword>
<keyword id="KW-0863">Zinc-finger</keyword>
<evidence type="ECO:0000250" key="1"/>
<evidence type="ECO:0000250" key="2">
    <source>
        <dbReference type="UniProtKB" id="A2A8L1"/>
    </source>
</evidence>
<evidence type="ECO:0000250" key="3">
    <source>
        <dbReference type="UniProtKB" id="Q12873"/>
    </source>
</evidence>
<evidence type="ECO:0000250" key="4">
    <source>
        <dbReference type="UniProtKB" id="Q8TDI0"/>
    </source>
</evidence>
<evidence type="ECO:0000255" key="5">
    <source>
        <dbReference type="PROSITE-ProRule" id="PRU00053"/>
    </source>
</evidence>
<evidence type="ECO:0000255" key="6">
    <source>
        <dbReference type="PROSITE-ProRule" id="PRU00146"/>
    </source>
</evidence>
<evidence type="ECO:0000255" key="7">
    <source>
        <dbReference type="PROSITE-ProRule" id="PRU00541"/>
    </source>
</evidence>
<evidence type="ECO:0000255" key="8">
    <source>
        <dbReference type="PROSITE-ProRule" id="PRU00542"/>
    </source>
</evidence>
<evidence type="ECO:0000256" key="9">
    <source>
        <dbReference type="SAM" id="MobiDB-lite"/>
    </source>
</evidence>
<evidence type="ECO:0000269" key="10">
    <source>
    </source>
</evidence>
<evidence type="ECO:0000305" key="11"/>
<gene>
    <name type="primary">Chd5</name>
</gene>
<proteinExistence type="evidence at protein level"/>
<name>CHD5_RAT</name>
<dbReference type="EC" id="3.6.4.-" evidence="3"/>
<dbReference type="EMBL" id="AABR06041085">
    <property type="status" value="NOT_ANNOTATED_CDS"/>
    <property type="molecule type" value="Genomic_DNA"/>
</dbReference>
<dbReference type="SMR" id="D3ZD32"/>
<dbReference type="FunCoup" id="D3ZD32">
    <property type="interactions" value="1104"/>
</dbReference>
<dbReference type="IntAct" id="D3ZD32">
    <property type="interactions" value="1"/>
</dbReference>
<dbReference type="STRING" id="10116.ENSRNOP00000024732"/>
<dbReference type="GlyGen" id="D3ZD32">
    <property type="glycosylation" value="1 site"/>
</dbReference>
<dbReference type="iPTMnet" id="D3ZD32"/>
<dbReference type="PhosphoSitePlus" id="D3ZD32"/>
<dbReference type="jPOST" id="D3ZD32"/>
<dbReference type="PaxDb" id="10116-ENSRNOP00000024732"/>
<dbReference type="PeptideAtlas" id="D3ZD32"/>
<dbReference type="AGR" id="RGD:1582725"/>
<dbReference type="RGD" id="1582725">
    <property type="gene designation" value="Chd5"/>
</dbReference>
<dbReference type="eggNOG" id="KOG0383">
    <property type="taxonomic scope" value="Eukaryota"/>
</dbReference>
<dbReference type="HOGENOM" id="CLU_000315_22_1_1"/>
<dbReference type="InParanoid" id="D3ZD32"/>
<dbReference type="TreeFam" id="TF106448"/>
<dbReference type="PRO" id="PR:D3ZD32"/>
<dbReference type="Proteomes" id="UP000002494">
    <property type="component" value="Unplaced"/>
</dbReference>
<dbReference type="GO" id="GO:0000785">
    <property type="term" value="C:chromatin"/>
    <property type="evidence" value="ECO:0000314"/>
    <property type="project" value="UniProtKB"/>
</dbReference>
<dbReference type="GO" id="GO:0000792">
    <property type="term" value="C:heterochromatin"/>
    <property type="evidence" value="ECO:0000250"/>
    <property type="project" value="UniProtKB"/>
</dbReference>
<dbReference type="GO" id="GO:0005634">
    <property type="term" value="C:nucleus"/>
    <property type="evidence" value="ECO:0000314"/>
    <property type="project" value="UniProtKB"/>
</dbReference>
<dbReference type="GO" id="GO:0016581">
    <property type="term" value="C:NuRD complex"/>
    <property type="evidence" value="ECO:0000250"/>
    <property type="project" value="UniProtKB"/>
</dbReference>
<dbReference type="GO" id="GO:0005524">
    <property type="term" value="F:ATP binding"/>
    <property type="evidence" value="ECO:0007669"/>
    <property type="project" value="UniProtKB-KW"/>
</dbReference>
<dbReference type="GO" id="GO:0016887">
    <property type="term" value="F:ATP hydrolysis activity"/>
    <property type="evidence" value="ECO:0000318"/>
    <property type="project" value="GO_Central"/>
</dbReference>
<dbReference type="GO" id="GO:0140658">
    <property type="term" value="F:ATP-dependent chromatin remodeler activity"/>
    <property type="evidence" value="ECO:0000318"/>
    <property type="project" value="GO_Central"/>
</dbReference>
<dbReference type="GO" id="GO:0003682">
    <property type="term" value="F:chromatin binding"/>
    <property type="evidence" value="ECO:0000314"/>
    <property type="project" value="RGD"/>
</dbReference>
<dbReference type="GO" id="GO:0003677">
    <property type="term" value="F:DNA binding"/>
    <property type="evidence" value="ECO:0000318"/>
    <property type="project" value="GO_Central"/>
</dbReference>
<dbReference type="GO" id="GO:0004386">
    <property type="term" value="F:helicase activity"/>
    <property type="evidence" value="ECO:0007669"/>
    <property type="project" value="UniProtKB-KW"/>
</dbReference>
<dbReference type="GO" id="GO:0042393">
    <property type="term" value="F:histone binding"/>
    <property type="evidence" value="ECO:0000266"/>
    <property type="project" value="RGD"/>
</dbReference>
<dbReference type="GO" id="GO:0042826">
    <property type="term" value="F:histone deacetylase binding"/>
    <property type="evidence" value="ECO:0000266"/>
    <property type="project" value="RGD"/>
</dbReference>
<dbReference type="GO" id="GO:0061628">
    <property type="term" value="F:histone H3K27me3 reader activity"/>
    <property type="evidence" value="ECO:0000250"/>
    <property type="project" value="UniProtKB"/>
</dbReference>
<dbReference type="GO" id="GO:0008270">
    <property type="term" value="F:zinc ion binding"/>
    <property type="evidence" value="ECO:0007669"/>
    <property type="project" value="UniProtKB-KW"/>
</dbReference>
<dbReference type="GO" id="GO:0021895">
    <property type="term" value="P:cerebral cortex neuron differentiation"/>
    <property type="evidence" value="ECO:0000250"/>
    <property type="project" value="UniProtKB"/>
</dbReference>
<dbReference type="GO" id="GO:0006338">
    <property type="term" value="P:chromatin remodeling"/>
    <property type="evidence" value="ECO:0000250"/>
    <property type="project" value="UniProtKB"/>
</dbReference>
<dbReference type="GO" id="GO:0008285">
    <property type="term" value="P:negative regulation of cell population proliferation"/>
    <property type="evidence" value="ECO:0000266"/>
    <property type="project" value="RGD"/>
</dbReference>
<dbReference type="GO" id="GO:0000122">
    <property type="term" value="P:negative regulation of transcription by RNA polymerase II"/>
    <property type="evidence" value="ECO:0000250"/>
    <property type="project" value="UniProtKB"/>
</dbReference>
<dbReference type="GO" id="GO:1901798">
    <property type="term" value="P:positive regulation of signal transduction by p53 class mediator"/>
    <property type="evidence" value="ECO:0000250"/>
    <property type="project" value="UniProtKB"/>
</dbReference>
<dbReference type="GO" id="GO:0045595">
    <property type="term" value="P:regulation of cell differentiation"/>
    <property type="evidence" value="ECO:0000266"/>
    <property type="project" value="RGD"/>
</dbReference>
<dbReference type="GO" id="GO:0006357">
    <property type="term" value="P:regulation of transcription by RNA polymerase II"/>
    <property type="evidence" value="ECO:0000266"/>
    <property type="project" value="RGD"/>
</dbReference>
<dbReference type="GO" id="GO:0035092">
    <property type="term" value="P:sperm DNA condensation"/>
    <property type="evidence" value="ECO:0000250"/>
    <property type="project" value="UniProtKB"/>
</dbReference>
<dbReference type="GO" id="GO:0006366">
    <property type="term" value="P:transcription by RNA polymerase II"/>
    <property type="evidence" value="ECO:0000315"/>
    <property type="project" value="UniProtKB"/>
</dbReference>
<dbReference type="CDD" id="cd18667">
    <property type="entry name" value="CD1_tandem_CHD3-4_like"/>
    <property type="match status" value="1"/>
</dbReference>
<dbReference type="CDD" id="cd18662">
    <property type="entry name" value="CD2_tandem_CHD3-4_like"/>
    <property type="match status" value="1"/>
</dbReference>
<dbReference type="CDD" id="cd18057">
    <property type="entry name" value="DEXHc_CHD5"/>
    <property type="match status" value="1"/>
</dbReference>
<dbReference type="CDD" id="cd15531">
    <property type="entry name" value="PHD1_CHD_II"/>
    <property type="match status" value="1"/>
</dbReference>
<dbReference type="CDD" id="cd15532">
    <property type="entry name" value="PHD2_CHD_II"/>
    <property type="match status" value="1"/>
</dbReference>
<dbReference type="CDD" id="cd18793">
    <property type="entry name" value="SF2_C_SNF"/>
    <property type="match status" value="1"/>
</dbReference>
<dbReference type="FunFam" id="1.10.10.60:FF:000037">
    <property type="entry name" value="chromodomain-helicase-DNA-binding protein 3 isoform X1"/>
    <property type="match status" value="1"/>
</dbReference>
<dbReference type="FunFam" id="2.40.50.40:FF:000003">
    <property type="entry name" value="chromodomain-helicase-DNA-binding protein 3 isoform X1"/>
    <property type="match status" value="1"/>
</dbReference>
<dbReference type="FunFam" id="3.30.40.10:FF:000001">
    <property type="entry name" value="chromodomain-helicase-DNA-binding protein 3 isoform X1"/>
    <property type="match status" value="1"/>
</dbReference>
<dbReference type="FunFam" id="3.40.50.10810:FF:000001">
    <property type="entry name" value="chromodomain-helicase-DNA-binding protein 3 isoform X1"/>
    <property type="match status" value="1"/>
</dbReference>
<dbReference type="FunFam" id="3.30.40.10:FF:000011">
    <property type="entry name" value="chromodomain-helicase-DNA-binding protein 4 isoform X1"/>
    <property type="match status" value="1"/>
</dbReference>
<dbReference type="FunFam" id="3.40.50.300:FF:000015">
    <property type="entry name" value="chromodomain-helicase-DNA-binding protein 9 isoform X1"/>
    <property type="match status" value="1"/>
</dbReference>
<dbReference type="Gene3D" id="2.40.50.40">
    <property type="match status" value="2"/>
</dbReference>
<dbReference type="Gene3D" id="1.10.10.60">
    <property type="entry name" value="Homeodomain-like"/>
    <property type="match status" value="1"/>
</dbReference>
<dbReference type="Gene3D" id="3.40.50.300">
    <property type="entry name" value="P-loop containing nucleotide triphosphate hydrolases"/>
    <property type="match status" value="1"/>
</dbReference>
<dbReference type="Gene3D" id="3.40.50.10810">
    <property type="entry name" value="Tandem AAA-ATPase domain"/>
    <property type="match status" value="1"/>
</dbReference>
<dbReference type="Gene3D" id="3.30.40.10">
    <property type="entry name" value="Zinc/RING finger domain, C3HC4 (zinc finger)"/>
    <property type="match status" value="2"/>
</dbReference>
<dbReference type="InterPro" id="IPR012957">
    <property type="entry name" value="CHD_C2"/>
</dbReference>
<dbReference type="InterPro" id="IPR009462">
    <property type="entry name" value="CHD_II_SANT-like"/>
</dbReference>
<dbReference type="InterPro" id="IPR012958">
    <property type="entry name" value="CHD_N"/>
</dbReference>
<dbReference type="InterPro" id="IPR016197">
    <property type="entry name" value="Chromo-like_dom_sf"/>
</dbReference>
<dbReference type="InterPro" id="IPR000953">
    <property type="entry name" value="Chromo/chromo_shadow_dom"/>
</dbReference>
<dbReference type="InterPro" id="IPR023780">
    <property type="entry name" value="Chromo_domain"/>
</dbReference>
<dbReference type="InterPro" id="IPR028727">
    <property type="entry name" value="DEXHc_CHD5"/>
</dbReference>
<dbReference type="InterPro" id="IPR002464">
    <property type="entry name" value="DNA/RNA_helicase_DEAH_CS"/>
</dbReference>
<dbReference type="InterPro" id="IPR009463">
    <property type="entry name" value="DUF1087"/>
</dbReference>
<dbReference type="InterPro" id="IPR014001">
    <property type="entry name" value="Helicase_ATP-bd"/>
</dbReference>
<dbReference type="InterPro" id="IPR001650">
    <property type="entry name" value="Helicase_C-like"/>
</dbReference>
<dbReference type="InterPro" id="IPR027417">
    <property type="entry name" value="P-loop_NTPase"/>
</dbReference>
<dbReference type="InterPro" id="IPR038718">
    <property type="entry name" value="SNF2-like_sf"/>
</dbReference>
<dbReference type="InterPro" id="IPR049730">
    <property type="entry name" value="SNF2/RAD54-like_C"/>
</dbReference>
<dbReference type="InterPro" id="IPR000330">
    <property type="entry name" value="SNF2_N"/>
</dbReference>
<dbReference type="InterPro" id="IPR019786">
    <property type="entry name" value="Zinc_finger_PHD-type_CS"/>
</dbReference>
<dbReference type="InterPro" id="IPR011011">
    <property type="entry name" value="Znf_FYVE_PHD"/>
</dbReference>
<dbReference type="InterPro" id="IPR001965">
    <property type="entry name" value="Znf_PHD"/>
</dbReference>
<dbReference type="InterPro" id="IPR019787">
    <property type="entry name" value="Znf_PHD-finger"/>
</dbReference>
<dbReference type="InterPro" id="IPR013083">
    <property type="entry name" value="Znf_RING/FYVE/PHD"/>
</dbReference>
<dbReference type="PANTHER" id="PTHR45623">
    <property type="entry name" value="CHROMODOMAIN-HELICASE-DNA-BINDING PROTEIN 3-RELATED-RELATED"/>
    <property type="match status" value="1"/>
</dbReference>
<dbReference type="PANTHER" id="PTHR45623:SF6">
    <property type="entry name" value="CHROMODOMAIN-HELICASE-DNA-BINDING PROTEIN 5"/>
    <property type="match status" value="1"/>
</dbReference>
<dbReference type="Pfam" id="PF08074">
    <property type="entry name" value="CHDCT2"/>
    <property type="match status" value="1"/>
</dbReference>
<dbReference type="Pfam" id="PF06461">
    <property type="entry name" value="CHDII_SANT-like"/>
    <property type="match status" value="1"/>
</dbReference>
<dbReference type="Pfam" id="PF08073">
    <property type="entry name" value="CHDNT"/>
    <property type="match status" value="1"/>
</dbReference>
<dbReference type="Pfam" id="PF00385">
    <property type="entry name" value="Chromo"/>
    <property type="match status" value="1"/>
</dbReference>
<dbReference type="Pfam" id="PF06465">
    <property type="entry name" value="DUF1087"/>
    <property type="match status" value="1"/>
</dbReference>
<dbReference type="Pfam" id="PF00271">
    <property type="entry name" value="Helicase_C"/>
    <property type="match status" value="1"/>
</dbReference>
<dbReference type="Pfam" id="PF00628">
    <property type="entry name" value="PHD"/>
    <property type="match status" value="2"/>
</dbReference>
<dbReference type="Pfam" id="PF00176">
    <property type="entry name" value="SNF2-rel_dom"/>
    <property type="match status" value="1"/>
</dbReference>
<dbReference type="SMART" id="SM00298">
    <property type="entry name" value="CHROMO"/>
    <property type="match status" value="2"/>
</dbReference>
<dbReference type="SMART" id="SM00487">
    <property type="entry name" value="DEXDc"/>
    <property type="match status" value="1"/>
</dbReference>
<dbReference type="SMART" id="SM01146">
    <property type="entry name" value="DUF1086"/>
    <property type="match status" value="1"/>
</dbReference>
<dbReference type="SMART" id="SM01147">
    <property type="entry name" value="DUF1087"/>
    <property type="match status" value="1"/>
</dbReference>
<dbReference type="SMART" id="SM00490">
    <property type="entry name" value="HELICc"/>
    <property type="match status" value="1"/>
</dbReference>
<dbReference type="SMART" id="SM00249">
    <property type="entry name" value="PHD"/>
    <property type="match status" value="2"/>
</dbReference>
<dbReference type="SUPFAM" id="SSF54160">
    <property type="entry name" value="Chromo domain-like"/>
    <property type="match status" value="2"/>
</dbReference>
<dbReference type="SUPFAM" id="SSF57903">
    <property type="entry name" value="FYVE/PHD zinc finger"/>
    <property type="match status" value="1"/>
</dbReference>
<dbReference type="SUPFAM" id="SSF52540">
    <property type="entry name" value="P-loop containing nucleoside triphosphate hydrolases"/>
    <property type="match status" value="2"/>
</dbReference>
<dbReference type="PROSITE" id="PS50013">
    <property type="entry name" value="CHROMO_2"/>
    <property type="match status" value="2"/>
</dbReference>
<dbReference type="PROSITE" id="PS00690">
    <property type="entry name" value="DEAH_ATP_HELICASE"/>
    <property type="match status" value="1"/>
</dbReference>
<dbReference type="PROSITE" id="PS51192">
    <property type="entry name" value="HELICASE_ATP_BIND_1"/>
    <property type="match status" value="1"/>
</dbReference>
<dbReference type="PROSITE" id="PS51194">
    <property type="entry name" value="HELICASE_CTER"/>
    <property type="match status" value="1"/>
</dbReference>
<dbReference type="PROSITE" id="PS01359">
    <property type="entry name" value="ZF_PHD_1"/>
    <property type="match status" value="2"/>
</dbReference>
<dbReference type="PROSITE" id="PS50016">
    <property type="entry name" value="ZF_PHD_2"/>
    <property type="match status" value="2"/>
</dbReference>
<reference key="1">
    <citation type="journal article" date="2004" name="Nature">
        <title>Genome sequence of the Brown Norway rat yields insights into mammalian evolution.</title>
        <authorList>
            <person name="Gibbs R.A."/>
            <person name="Weinstock G.M."/>
            <person name="Metzker M.L."/>
            <person name="Muzny D.M."/>
            <person name="Sodergren E.J."/>
            <person name="Scherer S."/>
            <person name="Scott G."/>
            <person name="Steffen D."/>
            <person name="Worley K.C."/>
            <person name="Burch P.E."/>
            <person name="Okwuonu G."/>
            <person name="Hines S."/>
            <person name="Lewis L."/>
            <person name="Deramo C."/>
            <person name="Delgado O."/>
            <person name="Dugan-Rocha S."/>
            <person name="Miner G."/>
            <person name="Morgan M."/>
            <person name="Hawes A."/>
            <person name="Gill R."/>
            <person name="Holt R.A."/>
            <person name="Adams M.D."/>
            <person name="Amanatides P.G."/>
            <person name="Baden-Tillson H."/>
            <person name="Barnstead M."/>
            <person name="Chin S."/>
            <person name="Evans C.A."/>
            <person name="Ferriera S."/>
            <person name="Fosler C."/>
            <person name="Glodek A."/>
            <person name="Gu Z."/>
            <person name="Jennings D."/>
            <person name="Kraft C.L."/>
            <person name="Nguyen T."/>
            <person name="Pfannkoch C.M."/>
            <person name="Sitter C."/>
            <person name="Sutton G.G."/>
            <person name="Venter J.C."/>
            <person name="Woodage T."/>
            <person name="Smith D."/>
            <person name="Lee H.-M."/>
            <person name="Gustafson E."/>
            <person name="Cahill P."/>
            <person name="Kana A."/>
            <person name="Doucette-Stamm L."/>
            <person name="Weinstock K."/>
            <person name="Fechtel K."/>
            <person name="Weiss R.B."/>
            <person name="Dunn D.M."/>
            <person name="Green E.D."/>
            <person name="Blakesley R.W."/>
            <person name="Bouffard G.G."/>
            <person name="De Jong P.J."/>
            <person name="Osoegawa K."/>
            <person name="Zhu B."/>
            <person name="Marra M."/>
            <person name="Schein J."/>
            <person name="Bosdet I."/>
            <person name="Fjell C."/>
            <person name="Jones S."/>
            <person name="Krzywinski M."/>
            <person name="Mathewson C."/>
            <person name="Siddiqui A."/>
            <person name="Wye N."/>
            <person name="McPherson J."/>
            <person name="Zhao S."/>
            <person name="Fraser C.M."/>
            <person name="Shetty J."/>
            <person name="Shatsman S."/>
            <person name="Geer K."/>
            <person name="Chen Y."/>
            <person name="Abramzon S."/>
            <person name="Nierman W.C."/>
            <person name="Havlak P.H."/>
            <person name="Chen R."/>
            <person name="Durbin K.J."/>
            <person name="Egan A."/>
            <person name="Ren Y."/>
            <person name="Song X.-Z."/>
            <person name="Li B."/>
            <person name="Liu Y."/>
            <person name="Qin X."/>
            <person name="Cawley S."/>
            <person name="Cooney A.J."/>
            <person name="D'Souza L.M."/>
            <person name="Martin K."/>
            <person name="Wu J.Q."/>
            <person name="Gonzalez-Garay M.L."/>
            <person name="Jackson A.R."/>
            <person name="Kalafus K.J."/>
            <person name="McLeod M.P."/>
            <person name="Milosavljevic A."/>
            <person name="Virk D."/>
            <person name="Volkov A."/>
            <person name="Wheeler D.A."/>
            <person name="Zhang Z."/>
            <person name="Bailey J.A."/>
            <person name="Eichler E.E."/>
            <person name="Tuzun E."/>
            <person name="Birney E."/>
            <person name="Mongin E."/>
            <person name="Ureta-Vidal A."/>
            <person name="Woodwark C."/>
            <person name="Zdobnov E."/>
            <person name="Bork P."/>
            <person name="Suyama M."/>
            <person name="Torrents D."/>
            <person name="Alexandersson M."/>
            <person name="Trask B.J."/>
            <person name="Young J.M."/>
            <person name="Huang H."/>
            <person name="Wang H."/>
            <person name="Xing H."/>
            <person name="Daniels S."/>
            <person name="Gietzen D."/>
            <person name="Schmidt J."/>
            <person name="Stevens K."/>
            <person name="Vitt U."/>
            <person name="Wingrove J."/>
            <person name="Camara F."/>
            <person name="Mar Alba M."/>
            <person name="Abril J.F."/>
            <person name="Guigo R."/>
            <person name="Smit A."/>
            <person name="Dubchak I."/>
            <person name="Rubin E.M."/>
            <person name="Couronne O."/>
            <person name="Poliakov A."/>
            <person name="Huebner N."/>
            <person name="Ganten D."/>
            <person name="Goesele C."/>
            <person name="Hummel O."/>
            <person name="Kreitler T."/>
            <person name="Lee Y.-A."/>
            <person name="Monti J."/>
            <person name="Schulz H."/>
            <person name="Zimdahl H."/>
            <person name="Himmelbauer H."/>
            <person name="Lehrach H."/>
            <person name="Jacob H.J."/>
            <person name="Bromberg S."/>
            <person name="Gullings-Handley J."/>
            <person name="Jensen-Seaman M.I."/>
            <person name="Kwitek A.E."/>
            <person name="Lazar J."/>
            <person name="Pasko D."/>
            <person name="Tonellato P.J."/>
            <person name="Twigger S."/>
            <person name="Ponting C.P."/>
            <person name="Duarte J.M."/>
            <person name="Rice S."/>
            <person name="Goodstadt L."/>
            <person name="Beatson S.A."/>
            <person name="Emes R.D."/>
            <person name="Winter E.E."/>
            <person name="Webber C."/>
            <person name="Brandt P."/>
            <person name="Nyakatura G."/>
            <person name="Adetobi M."/>
            <person name="Chiaromonte F."/>
            <person name="Elnitski L."/>
            <person name="Eswara P."/>
            <person name="Hardison R.C."/>
            <person name="Hou M."/>
            <person name="Kolbe D."/>
            <person name="Makova K."/>
            <person name="Miller W."/>
            <person name="Nekrutenko A."/>
            <person name="Riemer C."/>
            <person name="Schwartz S."/>
            <person name="Taylor J."/>
            <person name="Yang S."/>
            <person name="Zhang Y."/>
            <person name="Lindpaintner K."/>
            <person name="Andrews T.D."/>
            <person name="Caccamo M."/>
            <person name="Clamp M."/>
            <person name="Clarke L."/>
            <person name="Curwen V."/>
            <person name="Durbin R.M."/>
            <person name="Eyras E."/>
            <person name="Searle S.M."/>
            <person name="Cooper G.M."/>
            <person name="Batzoglou S."/>
            <person name="Brudno M."/>
            <person name="Sidow A."/>
            <person name="Stone E.A."/>
            <person name="Payseur B.A."/>
            <person name="Bourque G."/>
            <person name="Lopez-Otin C."/>
            <person name="Puente X.S."/>
            <person name="Chakrabarti K."/>
            <person name="Chatterji S."/>
            <person name="Dewey C."/>
            <person name="Pachter L."/>
            <person name="Bray N."/>
            <person name="Yap V.B."/>
            <person name="Caspi A."/>
            <person name="Tesler G."/>
            <person name="Pevzner P.A."/>
            <person name="Haussler D."/>
            <person name="Roskin K.M."/>
            <person name="Baertsch R."/>
            <person name="Clawson H."/>
            <person name="Furey T.S."/>
            <person name="Hinrichs A.S."/>
            <person name="Karolchik D."/>
            <person name="Kent W.J."/>
            <person name="Rosenbloom K.R."/>
            <person name="Trumbower H."/>
            <person name="Weirauch M."/>
            <person name="Cooper D.N."/>
            <person name="Stenson P.D."/>
            <person name="Ma B."/>
            <person name="Brent M."/>
            <person name="Arumugam M."/>
            <person name="Shteynberg D."/>
            <person name="Copley R.R."/>
            <person name="Taylor M.S."/>
            <person name="Riethman H."/>
            <person name="Mudunuri U."/>
            <person name="Peterson J."/>
            <person name="Guyer M."/>
            <person name="Felsenfeld A."/>
            <person name="Old S."/>
            <person name="Mockrin S."/>
            <person name="Collins F.S."/>
        </authorList>
    </citation>
    <scope>NUCLEOTIDE SEQUENCE [LARGE SCALE GENOMIC DNA]</scope>
    <source>
        <strain>Brown Norway</strain>
    </source>
</reference>
<reference key="2">
    <citation type="journal article" date="2011" name="PLoS ONE">
        <title>CHD5, a brain-specific paralog of Mi2 chromatin remodeling enzymes, regulates expression of neuronal genes.</title>
        <authorList>
            <person name="Potts R.C."/>
            <person name="Zhang P."/>
            <person name="Wurster A.L."/>
            <person name="Precht P."/>
            <person name="Mughal M.R."/>
            <person name="Wood W.H."/>
            <person name="Zhang Y."/>
            <person name="Becker K.G."/>
            <person name="Mattson M.P."/>
            <person name="Pazin M.J."/>
        </authorList>
    </citation>
    <scope>FUNCTION IN TRANSCRIPTION</scope>
    <scope>SUBCELLULAR LOCATION</scope>
    <scope>TISSUE SPECIFICITY</scope>
</reference>
<protein>
    <recommendedName>
        <fullName>Chromodomain-helicase-DNA-binding protein 5</fullName>
        <shortName>CHD-5</shortName>
        <ecNumber evidence="3">3.6.4.-</ecNumber>
    </recommendedName>
    <alternativeName>
        <fullName>ATP-dependent helicase CHD5</fullName>
    </alternativeName>
</protein>